<keyword id="KW-1064">Adaptive immunity</keyword>
<keyword id="KW-0094">Blood coagulation</keyword>
<keyword id="KW-0175">Coiled coil</keyword>
<keyword id="KW-0903">Direct protein sequencing</keyword>
<keyword id="KW-1015">Disulfide bond</keyword>
<keyword id="KW-0356">Hemostasis</keyword>
<keyword id="KW-0391">Immunity</keyword>
<keyword id="KW-0399">Innate immunity</keyword>
<keyword id="KW-0964">Secreted</keyword>
<sequence length="19" mass="1758">ADGSDPVGGESLPDTGGAR</sequence>
<reference key="1">
    <citation type="journal article" date="1967" name="Arch. Biochem. Biophys.">
        <title>Amino acid sequence studies on artiodacty fibrinopeptides.</title>
        <authorList>
            <person name="Mross G.A."/>
            <person name="Doolittle R.F."/>
        </authorList>
    </citation>
    <scope>PROTEIN SEQUENCE</scope>
</reference>
<protein>
    <recommendedName>
        <fullName>Fibrinogen alpha chain</fullName>
    </recommendedName>
    <component>
        <recommendedName>
            <fullName>Fibrinopeptide A</fullName>
        </recommendedName>
    </component>
</protein>
<comment type="function">
    <text evidence="1">Cleaved by the protease thrombin to yield monomers which, together with fibrinogen beta (FGB) and fibrinogen gamma (FGG), polymerize to form an insoluble fibrin matrix. Fibrin has a major function in hemostasis as one of the primary components of blood clots. In addition, functions during the early stages of wound repair to stabilize the lesion and guide cell migration during re-epithelialization. Was originally thought to be essential for platelet aggregation, based on in vitro studies using anticoagulated blood. However, subsequent studies have shown that it is not absolutely required for thrombus formation in vivo. Enhances expression of SELP in activated platelets via an ITGB3-dependent pathway. Maternal fibrinogen is essential for successful pregnancy. Fibrin deposition is also associated with infection, where it protects against IFNG-mediated hemorrhage. May also facilitate the immune response via both innate and T-cell mediated pathways.</text>
</comment>
<comment type="subunit">
    <text evidence="2">Heterohexamer; disulfide linked. Contains 2 sets of 3 non-identical chains (alpha, beta and gamma). The 2 heterotrimers are in head to head conformation with the N-termini in a small central domain (By similarity).</text>
</comment>
<comment type="subcellular location">
    <subcellularLocation>
        <location>Secreted</location>
    </subcellularLocation>
</comment>
<comment type="domain">
    <text evidence="2">A long coiled coil structure formed by 3 polypeptide chains connects the central nodule to the C-terminal domains (distal nodules). The long C-terminal ends of the alpha chains fold back, contributing a fourth strand to the coiled coil structure.</text>
</comment>
<comment type="PTM">
    <text>Conversion of fibrinogen to fibrin is triggered by thrombin, which cleaves fibrinopeptides A and B from alpha and beta chains, and thus exposes the N-terminal polymerization sites responsible for the formation of the soft clot. The soft clot is converted into the hard clot by factor XIIIA which catalyzes the epsilon-(gamma-glutamyl)lysine cross-linking between gamma chains (stronger) and between alpha chains (weaker) of different monomers.</text>
</comment>
<comment type="PTM">
    <text>Forms F13A-mediated cross-links between a glutamine and the epsilon-amino group of a lysine residue, forming fibronectin-fibrinogen heteropolymers.</text>
</comment>
<organism>
    <name type="scientific">Antilocapra americana</name>
    <name type="common">Pronghorn</name>
    <dbReference type="NCBI Taxonomy" id="9891"/>
    <lineage>
        <taxon>Eukaryota</taxon>
        <taxon>Metazoa</taxon>
        <taxon>Chordata</taxon>
        <taxon>Craniata</taxon>
        <taxon>Vertebrata</taxon>
        <taxon>Euteleostomi</taxon>
        <taxon>Mammalia</taxon>
        <taxon>Eutheria</taxon>
        <taxon>Laurasiatheria</taxon>
        <taxon>Artiodactyla</taxon>
        <taxon>Ruminantia</taxon>
        <taxon>Pecora</taxon>
        <taxon>Antilocapridae</taxon>
        <taxon>Antilocapra</taxon>
    </lineage>
</organism>
<name>FIBA_ANTAM</name>
<gene>
    <name type="primary">FGA</name>
</gene>
<evidence type="ECO:0000250" key="1">
    <source>
        <dbReference type="UniProtKB" id="E9PV24"/>
    </source>
</evidence>
<evidence type="ECO:0000250" key="2">
    <source>
        <dbReference type="UniProtKB" id="P02671"/>
    </source>
</evidence>
<accession>P14440</accession>
<dbReference type="GO" id="GO:0005576">
    <property type="term" value="C:extracellular region"/>
    <property type="evidence" value="ECO:0007669"/>
    <property type="project" value="UniProtKB-SubCell"/>
</dbReference>
<dbReference type="GO" id="GO:0002250">
    <property type="term" value="P:adaptive immune response"/>
    <property type="evidence" value="ECO:0007669"/>
    <property type="project" value="UniProtKB-KW"/>
</dbReference>
<dbReference type="GO" id="GO:0007596">
    <property type="term" value="P:blood coagulation"/>
    <property type="evidence" value="ECO:0007669"/>
    <property type="project" value="UniProtKB-KW"/>
</dbReference>
<dbReference type="GO" id="GO:0045087">
    <property type="term" value="P:innate immune response"/>
    <property type="evidence" value="ECO:0007669"/>
    <property type="project" value="UniProtKB-KW"/>
</dbReference>
<feature type="peptide" id="PRO_0000009003" description="Fibrinopeptide A">
    <location>
        <begin position="1"/>
        <end position="19"/>
    </location>
</feature>
<feature type="non-terminal residue">
    <location>
        <position position="19"/>
    </location>
</feature>
<proteinExistence type="evidence at protein level"/>